<dbReference type="EMBL" id="CP001339">
    <property type="protein sequence ID" value="ACL72248.1"/>
    <property type="molecule type" value="Genomic_DNA"/>
</dbReference>
<dbReference type="RefSeq" id="WP_012637731.1">
    <property type="nucleotide sequence ID" value="NC_011901.1"/>
</dbReference>
<dbReference type="SMR" id="B8GQ53"/>
<dbReference type="STRING" id="396588.Tgr7_1162"/>
<dbReference type="KEGG" id="tgr:Tgr7_1162"/>
<dbReference type="eggNOG" id="COG0233">
    <property type="taxonomic scope" value="Bacteria"/>
</dbReference>
<dbReference type="HOGENOM" id="CLU_073981_2_1_6"/>
<dbReference type="OrthoDB" id="9804006at2"/>
<dbReference type="Proteomes" id="UP000002383">
    <property type="component" value="Chromosome"/>
</dbReference>
<dbReference type="GO" id="GO:0005829">
    <property type="term" value="C:cytosol"/>
    <property type="evidence" value="ECO:0007669"/>
    <property type="project" value="GOC"/>
</dbReference>
<dbReference type="GO" id="GO:0043023">
    <property type="term" value="F:ribosomal large subunit binding"/>
    <property type="evidence" value="ECO:0007669"/>
    <property type="project" value="TreeGrafter"/>
</dbReference>
<dbReference type="GO" id="GO:0002184">
    <property type="term" value="P:cytoplasmic translational termination"/>
    <property type="evidence" value="ECO:0007669"/>
    <property type="project" value="TreeGrafter"/>
</dbReference>
<dbReference type="CDD" id="cd00520">
    <property type="entry name" value="RRF"/>
    <property type="match status" value="1"/>
</dbReference>
<dbReference type="FunFam" id="1.10.132.20:FF:000001">
    <property type="entry name" value="Ribosome-recycling factor"/>
    <property type="match status" value="1"/>
</dbReference>
<dbReference type="FunFam" id="3.30.1360.40:FF:000001">
    <property type="entry name" value="Ribosome-recycling factor"/>
    <property type="match status" value="1"/>
</dbReference>
<dbReference type="Gene3D" id="3.30.1360.40">
    <property type="match status" value="1"/>
</dbReference>
<dbReference type="Gene3D" id="1.10.132.20">
    <property type="entry name" value="Ribosome-recycling factor"/>
    <property type="match status" value="1"/>
</dbReference>
<dbReference type="HAMAP" id="MF_00040">
    <property type="entry name" value="RRF"/>
    <property type="match status" value="1"/>
</dbReference>
<dbReference type="InterPro" id="IPR002661">
    <property type="entry name" value="Ribosome_recyc_fac"/>
</dbReference>
<dbReference type="InterPro" id="IPR023584">
    <property type="entry name" value="Ribosome_recyc_fac_dom"/>
</dbReference>
<dbReference type="InterPro" id="IPR036191">
    <property type="entry name" value="RRF_sf"/>
</dbReference>
<dbReference type="NCBIfam" id="TIGR00496">
    <property type="entry name" value="frr"/>
    <property type="match status" value="1"/>
</dbReference>
<dbReference type="PANTHER" id="PTHR20982:SF3">
    <property type="entry name" value="MITOCHONDRIAL RIBOSOME RECYCLING FACTOR PSEUDO 1"/>
    <property type="match status" value="1"/>
</dbReference>
<dbReference type="PANTHER" id="PTHR20982">
    <property type="entry name" value="RIBOSOME RECYCLING FACTOR"/>
    <property type="match status" value="1"/>
</dbReference>
<dbReference type="Pfam" id="PF01765">
    <property type="entry name" value="RRF"/>
    <property type="match status" value="1"/>
</dbReference>
<dbReference type="SUPFAM" id="SSF55194">
    <property type="entry name" value="Ribosome recycling factor, RRF"/>
    <property type="match status" value="1"/>
</dbReference>
<comment type="function">
    <text evidence="1">Responsible for the release of ribosomes from messenger RNA at the termination of protein biosynthesis. May increase the efficiency of translation by recycling ribosomes from one round of translation to another.</text>
</comment>
<comment type="subcellular location">
    <subcellularLocation>
        <location evidence="1">Cytoplasm</location>
    </subcellularLocation>
</comment>
<comment type="similarity">
    <text evidence="1">Belongs to the RRF family.</text>
</comment>
<name>RRF_THISH</name>
<accession>B8GQ53</accession>
<evidence type="ECO:0000255" key="1">
    <source>
        <dbReference type="HAMAP-Rule" id="MF_00040"/>
    </source>
</evidence>
<gene>
    <name evidence="1" type="primary">frr</name>
    <name type="ordered locus">Tgr7_1162</name>
</gene>
<sequence length="185" mass="20809">MTDSIKKDAKARMGKSIESLRNELAKIRTGRAHTSLLDHVMVEYYGSDVPISQVANVNVEDARTLTVTPWEKTMVSKVEKAIMTSDLGLNPSSMGTVIRVPMPALTEERRRDLVKVVRGEAENARVAIRNIRRDANNALKALVKGKEISEDDERRAQDEIQKLTDSHIEEVDKVLAEKEKELMEV</sequence>
<feature type="chain" id="PRO_1000194964" description="Ribosome-recycling factor">
    <location>
        <begin position="1"/>
        <end position="185"/>
    </location>
</feature>
<organism>
    <name type="scientific">Thioalkalivibrio sulfidiphilus (strain HL-EbGR7)</name>
    <dbReference type="NCBI Taxonomy" id="396588"/>
    <lineage>
        <taxon>Bacteria</taxon>
        <taxon>Pseudomonadati</taxon>
        <taxon>Pseudomonadota</taxon>
        <taxon>Gammaproteobacteria</taxon>
        <taxon>Chromatiales</taxon>
        <taxon>Ectothiorhodospiraceae</taxon>
        <taxon>Thioalkalivibrio</taxon>
    </lineage>
</organism>
<protein>
    <recommendedName>
        <fullName evidence="1">Ribosome-recycling factor</fullName>
        <shortName evidence="1">RRF</shortName>
    </recommendedName>
    <alternativeName>
        <fullName evidence="1">Ribosome-releasing factor</fullName>
    </alternativeName>
</protein>
<reference key="1">
    <citation type="journal article" date="2011" name="Stand. Genomic Sci.">
        <title>Complete genome sequence of 'Thioalkalivibrio sulfidophilus' HL-EbGr7.</title>
        <authorList>
            <person name="Muyzer G."/>
            <person name="Sorokin D.Y."/>
            <person name="Mavromatis K."/>
            <person name="Lapidus A."/>
            <person name="Clum A."/>
            <person name="Ivanova N."/>
            <person name="Pati A."/>
            <person name="d'Haeseleer P."/>
            <person name="Woyke T."/>
            <person name="Kyrpides N.C."/>
        </authorList>
    </citation>
    <scope>NUCLEOTIDE SEQUENCE [LARGE SCALE GENOMIC DNA]</scope>
    <source>
        <strain>HL-EbGR7</strain>
    </source>
</reference>
<proteinExistence type="inferred from homology"/>
<keyword id="KW-0963">Cytoplasm</keyword>
<keyword id="KW-0648">Protein biosynthesis</keyword>
<keyword id="KW-1185">Reference proteome</keyword>